<name>REM7_ARATH</name>
<dbReference type="EMBL" id="AL031004">
    <property type="protein sequence ID" value="CAA19757.1"/>
    <property type="status" value="ALT_SEQ"/>
    <property type="molecule type" value="Genomic_DNA"/>
</dbReference>
<dbReference type="EMBL" id="AL161579">
    <property type="protein sequence ID" value="CAB79884.1"/>
    <property type="status" value="ALT_SEQ"/>
    <property type="molecule type" value="Genomic_DNA"/>
</dbReference>
<dbReference type="EMBL" id="CP002687">
    <property type="protein sequence ID" value="AEE85942.1"/>
    <property type="molecule type" value="Genomic_DNA"/>
</dbReference>
<dbReference type="EMBL" id="AJ515263">
    <property type="protein sequence ID" value="CAD56215.1"/>
    <property type="molecule type" value="mRNA"/>
</dbReference>
<dbReference type="PIR" id="T05104">
    <property type="entry name" value="T05104"/>
</dbReference>
<dbReference type="RefSeq" id="NP_194894.2">
    <property type="nucleotide sequence ID" value="NM_119315.6"/>
</dbReference>
<dbReference type="SMR" id="Q8H2D0"/>
<dbReference type="BioGRID" id="14580">
    <property type="interactions" value="2"/>
</dbReference>
<dbReference type="IntAct" id="Q8H2D0">
    <property type="interactions" value="2"/>
</dbReference>
<dbReference type="STRING" id="3702.Q8H2D0"/>
<dbReference type="PaxDb" id="3702-AT4G31660.1"/>
<dbReference type="ProteomicsDB" id="236227"/>
<dbReference type="EnsemblPlants" id="AT4G31660.1">
    <property type="protein sequence ID" value="AT4G31660.1"/>
    <property type="gene ID" value="AT4G31660"/>
</dbReference>
<dbReference type="GeneID" id="829294"/>
<dbReference type="Gramene" id="AT4G31660.1">
    <property type="protein sequence ID" value="AT4G31660.1"/>
    <property type="gene ID" value="AT4G31660"/>
</dbReference>
<dbReference type="KEGG" id="ath:AT4G31660"/>
<dbReference type="Araport" id="AT4G31660"/>
<dbReference type="TAIR" id="AT4G31660"/>
<dbReference type="HOGENOM" id="CLU_015069_2_1_1"/>
<dbReference type="InParanoid" id="Q8H2D0"/>
<dbReference type="OMA" id="HRFEAGW"/>
<dbReference type="PhylomeDB" id="Q8H2D0"/>
<dbReference type="PRO" id="PR:Q8H2D0"/>
<dbReference type="Proteomes" id="UP000006548">
    <property type="component" value="Chromosome 4"/>
</dbReference>
<dbReference type="ExpressionAtlas" id="Q8H2D0">
    <property type="expression patterns" value="baseline"/>
</dbReference>
<dbReference type="GO" id="GO:0005634">
    <property type="term" value="C:nucleus"/>
    <property type="evidence" value="ECO:0007669"/>
    <property type="project" value="UniProtKB-SubCell"/>
</dbReference>
<dbReference type="GO" id="GO:0003677">
    <property type="term" value="F:DNA binding"/>
    <property type="evidence" value="ECO:0007669"/>
    <property type="project" value="UniProtKB-KW"/>
</dbReference>
<dbReference type="CDD" id="cd10017">
    <property type="entry name" value="B3_DNA"/>
    <property type="match status" value="2"/>
</dbReference>
<dbReference type="FunFam" id="2.40.330.10:FF:000009">
    <property type="entry name" value="Transcriptional factor B3 family protein"/>
    <property type="match status" value="1"/>
</dbReference>
<dbReference type="Gene3D" id="2.40.330.10">
    <property type="entry name" value="DNA-binding pseudobarrel domain"/>
    <property type="match status" value="2"/>
</dbReference>
<dbReference type="InterPro" id="IPR003340">
    <property type="entry name" value="B3_DNA-bd"/>
</dbReference>
<dbReference type="InterPro" id="IPR015300">
    <property type="entry name" value="DNA-bd_pseudobarrel_sf"/>
</dbReference>
<dbReference type="InterPro" id="IPR039218">
    <property type="entry name" value="REM_fam"/>
</dbReference>
<dbReference type="PANTHER" id="PTHR31674">
    <property type="entry name" value="B3 DOMAIN-CONTAINING PROTEIN REM-LIKE 3-RELATED"/>
    <property type="match status" value="1"/>
</dbReference>
<dbReference type="PANTHER" id="PTHR31674:SF96">
    <property type="entry name" value="B3 DOMAIN-CONTAINING PROTEIN REM-LIKE 3-RELATED"/>
    <property type="match status" value="1"/>
</dbReference>
<dbReference type="Pfam" id="PF02362">
    <property type="entry name" value="B3"/>
    <property type="match status" value="2"/>
</dbReference>
<dbReference type="SMART" id="SM01019">
    <property type="entry name" value="B3"/>
    <property type="match status" value="2"/>
</dbReference>
<dbReference type="SUPFAM" id="SSF101936">
    <property type="entry name" value="DNA-binding pseudobarrel domain"/>
    <property type="match status" value="2"/>
</dbReference>
<dbReference type="PROSITE" id="PS50863">
    <property type="entry name" value="B3"/>
    <property type="match status" value="2"/>
</dbReference>
<organism>
    <name type="scientific">Arabidopsis thaliana</name>
    <name type="common">Mouse-ear cress</name>
    <dbReference type="NCBI Taxonomy" id="3702"/>
    <lineage>
        <taxon>Eukaryota</taxon>
        <taxon>Viridiplantae</taxon>
        <taxon>Streptophyta</taxon>
        <taxon>Embryophyta</taxon>
        <taxon>Tracheophyta</taxon>
        <taxon>Spermatophyta</taxon>
        <taxon>Magnoliopsida</taxon>
        <taxon>eudicotyledons</taxon>
        <taxon>Gunneridae</taxon>
        <taxon>Pentapetalae</taxon>
        <taxon>rosids</taxon>
        <taxon>malvids</taxon>
        <taxon>Brassicales</taxon>
        <taxon>Brassicaceae</taxon>
        <taxon>Camelineae</taxon>
        <taxon>Arabidopsis</taxon>
    </lineage>
</organism>
<proteinExistence type="evidence at transcript level"/>
<comment type="subcellular location">
    <subcellularLocation>
        <location evidence="1">Nucleus</location>
    </subcellularLocation>
</comment>
<comment type="sequence caution" evidence="2">
    <conflict type="erroneous gene model prediction">
        <sequence resource="EMBL-CDS" id="CAA19757"/>
    </conflict>
</comment>
<comment type="sequence caution" evidence="2">
    <conflict type="erroneous gene model prediction">
        <sequence resource="EMBL-CDS" id="CAB79884"/>
    </conflict>
</comment>
<keyword id="KW-0238">DNA-binding</keyword>
<keyword id="KW-0539">Nucleus</keyword>
<keyword id="KW-1185">Reference proteome</keyword>
<keyword id="KW-0677">Repeat</keyword>
<keyword id="KW-0804">Transcription</keyword>
<keyword id="KW-0805">Transcription regulation</keyword>
<evidence type="ECO:0000255" key="1">
    <source>
        <dbReference type="PROSITE-ProRule" id="PRU00326"/>
    </source>
</evidence>
<evidence type="ECO:0000305" key="2"/>
<feature type="chain" id="PRO_0000375101" description="B3 domain-containing protein REM7">
    <location>
        <begin position="1"/>
        <end position="251"/>
    </location>
</feature>
<feature type="DNA-binding region" description="TF-B3 1" evidence="1">
    <location>
        <begin position="11"/>
        <end position="103"/>
    </location>
</feature>
<feature type="DNA-binding region" description="TF-B3 2" evidence="1">
    <location>
        <begin position="170"/>
        <end position="251"/>
    </location>
</feature>
<gene>
    <name type="primary">REM7</name>
    <name type="synonym">ARF25</name>
    <name type="ordered locus">At4g31660</name>
    <name type="ORF">F28M20.150</name>
</gene>
<sequence length="251" mass="28758">MADPVLQSPKNSHFFQPLLPGFDSYLNIPVKFFSKRIQGRNEGRTVELRTDASEKTWQVKIQGRRLTVGWKEFASAHDFRVGDIIVFRHEGSLVFHVTALGPSCCEIQYVPSCNNQENISNLSMKQSIKTELESSLDEDKVNMGKFPRKKHVKKRIPEAEAKSFSSDKSCFVAHVTDSNLREDTLFLPRKFDRSDGLIKGSNKIVLMNEEARTWTLILKFRNSSRTFYMRGGWTSFSMSMGLNLEIPSRLN</sequence>
<protein>
    <recommendedName>
        <fullName>B3 domain-containing protein REM7</fullName>
    </recommendedName>
    <alternativeName>
        <fullName>Auxin response factor 25</fullName>
    </alternativeName>
    <alternativeName>
        <fullName>Protein REPRODUCTIVE MERISTEM 7</fullName>
    </alternativeName>
</protein>
<accession>Q8H2D0</accession>
<accession>O81781</accession>
<reference key="1">
    <citation type="submission" date="2002-11" db="EMBL/GenBank/DDBJ databases">
        <title>Nucleotide sequence of the putative Arabidopsis ARF25.</title>
        <authorList>
            <person name="Carabelli M."/>
        </authorList>
    </citation>
    <scope>NUCLEOTIDE SEQUENCE [MRNA]</scope>
    <source>
        <strain>cv. Columbia</strain>
        <tissue>Flower</tissue>
    </source>
</reference>
<reference key="2">
    <citation type="journal article" date="1999" name="Nature">
        <title>Sequence and analysis of chromosome 4 of the plant Arabidopsis thaliana.</title>
        <authorList>
            <person name="Mayer K.F.X."/>
            <person name="Schueller C."/>
            <person name="Wambutt R."/>
            <person name="Murphy G."/>
            <person name="Volckaert G."/>
            <person name="Pohl T."/>
            <person name="Duesterhoeft A."/>
            <person name="Stiekema W."/>
            <person name="Entian K.-D."/>
            <person name="Terryn N."/>
            <person name="Harris B."/>
            <person name="Ansorge W."/>
            <person name="Brandt P."/>
            <person name="Grivell L.A."/>
            <person name="Rieger M."/>
            <person name="Weichselgartner M."/>
            <person name="de Simone V."/>
            <person name="Obermaier B."/>
            <person name="Mache R."/>
            <person name="Mueller M."/>
            <person name="Kreis M."/>
            <person name="Delseny M."/>
            <person name="Puigdomenech P."/>
            <person name="Watson M."/>
            <person name="Schmidtheini T."/>
            <person name="Reichert B."/>
            <person name="Portetelle D."/>
            <person name="Perez-Alonso M."/>
            <person name="Boutry M."/>
            <person name="Bancroft I."/>
            <person name="Vos P."/>
            <person name="Hoheisel J."/>
            <person name="Zimmermann W."/>
            <person name="Wedler H."/>
            <person name="Ridley P."/>
            <person name="Langham S.-A."/>
            <person name="McCullagh B."/>
            <person name="Bilham L."/>
            <person name="Robben J."/>
            <person name="van der Schueren J."/>
            <person name="Grymonprez B."/>
            <person name="Chuang Y.-J."/>
            <person name="Vandenbussche F."/>
            <person name="Braeken M."/>
            <person name="Weltjens I."/>
            <person name="Voet M."/>
            <person name="Bastiaens I."/>
            <person name="Aert R."/>
            <person name="Defoor E."/>
            <person name="Weitzenegger T."/>
            <person name="Bothe G."/>
            <person name="Ramsperger U."/>
            <person name="Hilbert H."/>
            <person name="Braun M."/>
            <person name="Holzer E."/>
            <person name="Brandt A."/>
            <person name="Peters S."/>
            <person name="van Staveren M."/>
            <person name="Dirkse W."/>
            <person name="Mooijman P."/>
            <person name="Klein Lankhorst R."/>
            <person name="Rose M."/>
            <person name="Hauf J."/>
            <person name="Koetter P."/>
            <person name="Berneiser S."/>
            <person name="Hempel S."/>
            <person name="Feldpausch M."/>
            <person name="Lamberth S."/>
            <person name="Van den Daele H."/>
            <person name="De Keyser A."/>
            <person name="Buysshaert C."/>
            <person name="Gielen J."/>
            <person name="Villarroel R."/>
            <person name="De Clercq R."/>
            <person name="van Montagu M."/>
            <person name="Rogers J."/>
            <person name="Cronin A."/>
            <person name="Quail M.A."/>
            <person name="Bray-Allen S."/>
            <person name="Clark L."/>
            <person name="Doggett J."/>
            <person name="Hall S."/>
            <person name="Kay M."/>
            <person name="Lennard N."/>
            <person name="McLay K."/>
            <person name="Mayes R."/>
            <person name="Pettett A."/>
            <person name="Rajandream M.A."/>
            <person name="Lyne M."/>
            <person name="Benes V."/>
            <person name="Rechmann S."/>
            <person name="Borkova D."/>
            <person name="Bloecker H."/>
            <person name="Scharfe M."/>
            <person name="Grimm M."/>
            <person name="Loehnert T.-H."/>
            <person name="Dose S."/>
            <person name="de Haan M."/>
            <person name="Maarse A.C."/>
            <person name="Schaefer M."/>
            <person name="Mueller-Auer S."/>
            <person name="Gabel C."/>
            <person name="Fuchs M."/>
            <person name="Fartmann B."/>
            <person name="Granderath K."/>
            <person name="Dauner D."/>
            <person name="Herzl A."/>
            <person name="Neumann S."/>
            <person name="Argiriou A."/>
            <person name="Vitale D."/>
            <person name="Liguori R."/>
            <person name="Piravandi E."/>
            <person name="Massenet O."/>
            <person name="Quigley F."/>
            <person name="Clabauld G."/>
            <person name="Muendlein A."/>
            <person name="Felber R."/>
            <person name="Schnabl S."/>
            <person name="Hiller R."/>
            <person name="Schmidt W."/>
            <person name="Lecharny A."/>
            <person name="Aubourg S."/>
            <person name="Chefdor F."/>
            <person name="Cooke R."/>
            <person name="Berger C."/>
            <person name="Monfort A."/>
            <person name="Casacuberta E."/>
            <person name="Gibbons T."/>
            <person name="Weber N."/>
            <person name="Vandenbol M."/>
            <person name="Bargues M."/>
            <person name="Terol J."/>
            <person name="Torres A."/>
            <person name="Perez-Perez A."/>
            <person name="Purnelle B."/>
            <person name="Bent E."/>
            <person name="Johnson S."/>
            <person name="Tacon D."/>
            <person name="Jesse T."/>
            <person name="Heijnen L."/>
            <person name="Schwarz S."/>
            <person name="Scholler P."/>
            <person name="Heber S."/>
            <person name="Francs P."/>
            <person name="Bielke C."/>
            <person name="Frishman D."/>
            <person name="Haase D."/>
            <person name="Lemcke K."/>
            <person name="Mewes H.-W."/>
            <person name="Stocker S."/>
            <person name="Zaccaria P."/>
            <person name="Bevan M."/>
            <person name="Wilson R.K."/>
            <person name="de la Bastide M."/>
            <person name="Habermann K."/>
            <person name="Parnell L."/>
            <person name="Dedhia N."/>
            <person name="Gnoj L."/>
            <person name="Schutz K."/>
            <person name="Huang E."/>
            <person name="Spiegel L."/>
            <person name="Sekhon M."/>
            <person name="Murray J."/>
            <person name="Sheet P."/>
            <person name="Cordes M."/>
            <person name="Abu-Threideh J."/>
            <person name="Stoneking T."/>
            <person name="Kalicki J."/>
            <person name="Graves T."/>
            <person name="Harmon G."/>
            <person name="Edwards J."/>
            <person name="Latreille P."/>
            <person name="Courtney L."/>
            <person name="Cloud J."/>
            <person name="Abbott A."/>
            <person name="Scott K."/>
            <person name="Johnson D."/>
            <person name="Minx P."/>
            <person name="Bentley D."/>
            <person name="Fulton B."/>
            <person name="Miller N."/>
            <person name="Greco T."/>
            <person name="Kemp K."/>
            <person name="Kramer J."/>
            <person name="Fulton L."/>
            <person name="Mardis E."/>
            <person name="Dante M."/>
            <person name="Pepin K."/>
            <person name="Hillier L.W."/>
            <person name="Nelson J."/>
            <person name="Spieth J."/>
            <person name="Ryan E."/>
            <person name="Andrews S."/>
            <person name="Geisel C."/>
            <person name="Layman D."/>
            <person name="Du H."/>
            <person name="Ali J."/>
            <person name="Berghoff A."/>
            <person name="Jones K."/>
            <person name="Drone K."/>
            <person name="Cotton M."/>
            <person name="Joshu C."/>
            <person name="Antonoiu B."/>
            <person name="Zidanic M."/>
            <person name="Strong C."/>
            <person name="Sun H."/>
            <person name="Lamar B."/>
            <person name="Yordan C."/>
            <person name="Ma P."/>
            <person name="Zhong J."/>
            <person name="Preston R."/>
            <person name="Vil D."/>
            <person name="Shekher M."/>
            <person name="Matero A."/>
            <person name="Shah R."/>
            <person name="Swaby I.K."/>
            <person name="O'Shaughnessy A."/>
            <person name="Rodriguez M."/>
            <person name="Hoffman J."/>
            <person name="Till S."/>
            <person name="Granat S."/>
            <person name="Shohdy N."/>
            <person name="Hasegawa A."/>
            <person name="Hameed A."/>
            <person name="Lodhi M."/>
            <person name="Johnson A."/>
            <person name="Chen E."/>
            <person name="Marra M.A."/>
            <person name="Martienssen R."/>
            <person name="McCombie W.R."/>
        </authorList>
    </citation>
    <scope>NUCLEOTIDE SEQUENCE [LARGE SCALE GENOMIC DNA]</scope>
    <source>
        <strain>cv. Columbia</strain>
    </source>
</reference>
<reference key="3">
    <citation type="journal article" date="2017" name="Plant J.">
        <title>Araport11: a complete reannotation of the Arabidopsis thaliana reference genome.</title>
        <authorList>
            <person name="Cheng C.Y."/>
            <person name="Krishnakumar V."/>
            <person name="Chan A.P."/>
            <person name="Thibaud-Nissen F."/>
            <person name="Schobel S."/>
            <person name="Town C.D."/>
        </authorList>
    </citation>
    <scope>GENOME REANNOTATION</scope>
    <source>
        <strain>cv. Columbia</strain>
    </source>
</reference>
<reference key="4">
    <citation type="journal article" date="2008" name="Trends Plant Sci.">
        <title>The plant B3 superfamily.</title>
        <authorList>
            <person name="Swaminathan K."/>
            <person name="Peterson K."/>
            <person name="Jack T."/>
        </authorList>
    </citation>
    <scope>GENE FAMILY</scope>
</reference>